<comment type="function">
    <text evidence="1">Zinc transporter. Acts as a Zn(2+):proton symporter, which likely mediates zinc ion uptake.</text>
</comment>
<comment type="catalytic activity">
    <reaction evidence="1">
        <text>Zn(2+)(out) + H(+)(out) = Zn(2+)(in) + H(+)(in)</text>
        <dbReference type="Rhea" id="RHEA:71195"/>
        <dbReference type="ChEBI" id="CHEBI:15378"/>
        <dbReference type="ChEBI" id="CHEBI:29105"/>
    </reaction>
    <physiologicalReaction direction="left-to-right" evidence="1">
        <dbReference type="Rhea" id="RHEA:71196"/>
    </physiologicalReaction>
</comment>
<comment type="subcellular location">
    <subcellularLocation>
        <location evidence="1">Cell inner membrane</location>
        <topology evidence="1">Multi-pass membrane protein</topology>
    </subcellularLocation>
</comment>
<comment type="similarity">
    <text evidence="1">Belongs to the CorA metal ion transporter (MIT) (TC 1.A.35) family.</text>
</comment>
<gene>
    <name evidence="1" type="primary">zntB</name>
    <name type="ordered locus">SFV_1816</name>
</gene>
<keyword id="KW-0997">Cell inner membrane</keyword>
<keyword id="KW-1003">Cell membrane</keyword>
<keyword id="KW-0406">Ion transport</keyword>
<keyword id="KW-0472">Membrane</keyword>
<keyword id="KW-0812">Transmembrane</keyword>
<keyword id="KW-1133">Transmembrane helix</keyword>
<keyword id="KW-0813">Transport</keyword>
<keyword id="KW-0862">Zinc</keyword>
<name>ZNTB_SHIF8</name>
<protein>
    <recommendedName>
        <fullName evidence="1">Zinc transport protein ZntB</fullName>
    </recommendedName>
</protein>
<proteinExistence type="inferred from homology"/>
<organism>
    <name type="scientific">Shigella flexneri serotype 5b (strain 8401)</name>
    <dbReference type="NCBI Taxonomy" id="373384"/>
    <lineage>
        <taxon>Bacteria</taxon>
        <taxon>Pseudomonadati</taxon>
        <taxon>Pseudomonadota</taxon>
        <taxon>Gammaproteobacteria</taxon>
        <taxon>Enterobacterales</taxon>
        <taxon>Enterobacteriaceae</taxon>
        <taxon>Shigella</taxon>
    </lineage>
</organism>
<dbReference type="EMBL" id="CP000266">
    <property type="protein sequence ID" value="ABF03976.1"/>
    <property type="molecule type" value="Genomic_DNA"/>
</dbReference>
<dbReference type="RefSeq" id="WP_000387378.1">
    <property type="nucleotide sequence ID" value="NC_008258.1"/>
</dbReference>
<dbReference type="SMR" id="Q0T3Y9"/>
<dbReference type="KEGG" id="sfv:SFV_1816"/>
<dbReference type="HOGENOM" id="CLU_007127_2_0_6"/>
<dbReference type="Proteomes" id="UP000000659">
    <property type="component" value="Chromosome"/>
</dbReference>
<dbReference type="GO" id="GO:0005886">
    <property type="term" value="C:plasma membrane"/>
    <property type="evidence" value="ECO:0007669"/>
    <property type="project" value="UniProtKB-SubCell"/>
</dbReference>
<dbReference type="GO" id="GO:0050897">
    <property type="term" value="F:cobalt ion binding"/>
    <property type="evidence" value="ECO:0007669"/>
    <property type="project" value="TreeGrafter"/>
</dbReference>
<dbReference type="GO" id="GO:0015087">
    <property type="term" value="F:cobalt ion transmembrane transporter activity"/>
    <property type="evidence" value="ECO:0007669"/>
    <property type="project" value="TreeGrafter"/>
</dbReference>
<dbReference type="GO" id="GO:0000287">
    <property type="term" value="F:magnesium ion binding"/>
    <property type="evidence" value="ECO:0007669"/>
    <property type="project" value="TreeGrafter"/>
</dbReference>
<dbReference type="GO" id="GO:0015095">
    <property type="term" value="F:magnesium ion transmembrane transporter activity"/>
    <property type="evidence" value="ECO:0007669"/>
    <property type="project" value="TreeGrafter"/>
</dbReference>
<dbReference type="GO" id="GO:0005385">
    <property type="term" value="F:zinc ion transmembrane transporter activity"/>
    <property type="evidence" value="ECO:0007669"/>
    <property type="project" value="UniProtKB-UniRule"/>
</dbReference>
<dbReference type="CDD" id="cd12833">
    <property type="entry name" value="ZntB-like_1"/>
    <property type="match status" value="1"/>
</dbReference>
<dbReference type="FunFam" id="1.20.58.340:FF:000002">
    <property type="entry name" value="Zinc transport protein ZntB"/>
    <property type="match status" value="1"/>
</dbReference>
<dbReference type="FunFam" id="3.30.460.20:FF:000001">
    <property type="entry name" value="Zinc transport protein ZntB"/>
    <property type="match status" value="1"/>
</dbReference>
<dbReference type="Gene3D" id="3.30.460.20">
    <property type="entry name" value="CorA soluble domain-like"/>
    <property type="match status" value="1"/>
</dbReference>
<dbReference type="Gene3D" id="1.20.58.340">
    <property type="entry name" value="Magnesium transport protein CorA, transmembrane region"/>
    <property type="match status" value="2"/>
</dbReference>
<dbReference type="HAMAP" id="MF_01565">
    <property type="entry name" value="ZntB"/>
    <property type="match status" value="1"/>
</dbReference>
<dbReference type="InterPro" id="IPR045861">
    <property type="entry name" value="CorA_cytoplasmic_dom"/>
</dbReference>
<dbReference type="InterPro" id="IPR045863">
    <property type="entry name" value="CorA_TM1_TM2"/>
</dbReference>
<dbReference type="InterPro" id="IPR002523">
    <property type="entry name" value="MgTranspt_CorA/ZnTranspt_ZntB"/>
</dbReference>
<dbReference type="InterPro" id="IPR023714">
    <property type="entry name" value="Zn_transp_ZntB"/>
</dbReference>
<dbReference type="NCBIfam" id="NF007092">
    <property type="entry name" value="PRK09546.1"/>
    <property type="match status" value="1"/>
</dbReference>
<dbReference type="PANTHER" id="PTHR46494">
    <property type="entry name" value="CORA FAMILY METAL ION TRANSPORTER (EUROFUNG)"/>
    <property type="match status" value="1"/>
</dbReference>
<dbReference type="PANTHER" id="PTHR46494:SF3">
    <property type="entry name" value="ZINC TRANSPORT PROTEIN ZNTB"/>
    <property type="match status" value="1"/>
</dbReference>
<dbReference type="Pfam" id="PF01544">
    <property type="entry name" value="CorA"/>
    <property type="match status" value="1"/>
</dbReference>
<dbReference type="SUPFAM" id="SSF143865">
    <property type="entry name" value="CorA soluble domain-like"/>
    <property type="match status" value="1"/>
</dbReference>
<dbReference type="SUPFAM" id="SSF144083">
    <property type="entry name" value="Magnesium transport protein CorA, transmembrane region"/>
    <property type="match status" value="1"/>
</dbReference>
<reference key="1">
    <citation type="journal article" date="2006" name="BMC Genomics">
        <title>Complete genome sequence of Shigella flexneri 5b and comparison with Shigella flexneri 2a.</title>
        <authorList>
            <person name="Nie H."/>
            <person name="Yang F."/>
            <person name="Zhang X."/>
            <person name="Yang J."/>
            <person name="Chen L."/>
            <person name="Wang J."/>
            <person name="Xiong Z."/>
            <person name="Peng J."/>
            <person name="Sun L."/>
            <person name="Dong J."/>
            <person name="Xue Y."/>
            <person name="Xu X."/>
            <person name="Chen S."/>
            <person name="Yao Z."/>
            <person name="Shen Y."/>
            <person name="Jin Q."/>
        </authorList>
    </citation>
    <scope>NUCLEOTIDE SEQUENCE [LARGE SCALE GENOMIC DNA]</scope>
    <source>
        <strain>8401</strain>
    </source>
</reference>
<accession>Q0T3Y9</accession>
<feature type="chain" id="PRO_1000069076" description="Zinc transport protein ZntB">
    <location>
        <begin position="1"/>
        <end position="327"/>
    </location>
</feature>
<feature type="topological domain" description="Cytoplasmic" evidence="1">
    <location>
        <begin position="1"/>
        <end position="273"/>
    </location>
</feature>
<feature type="transmembrane region" description="Helical" evidence="1">
    <location>
        <begin position="274"/>
        <end position="294"/>
    </location>
</feature>
<feature type="topological domain" description="Periplasmic" evidence="1">
    <location>
        <begin position="295"/>
        <end position="300"/>
    </location>
</feature>
<feature type="transmembrane region" description="Helical" evidence="1">
    <location>
        <begin position="301"/>
        <end position="321"/>
    </location>
</feature>
<feature type="topological domain" description="Cytoplasmic" evidence="1">
    <location>
        <begin position="322"/>
        <end position="327"/>
    </location>
</feature>
<sequence>MEAIKGSDVNVPDAVFAWMLDGRGGVKPLENTDVIDEAHPCWLHLNYVHHDSAQWLATTPLLPNNVRDALAGESTRPRVSRFGEGTLITLRCINGSTDERPDQLVAMRVYMDGRLIVSTRQRKVLALDDVVSDLEEGTGPTDCGGWLVDVCDALTDHSSEFIEQLHDKIIDLEDNLLDQQIPPRGFLALLRKQLIVMRRYMAPQRDVYARLASERLPWMSDDQRRRMQDIADRLGRGLDEIDACIARTGVMADEIAQVMQENLARRTYTMSLMAMVFLPSTFLTGLFGVNLGGIPGGGWQFGFSIFCILLVVLIGGVALWLYRSKWL</sequence>
<evidence type="ECO:0000255" key="1">
    <source>
        <dbReference type="HAMAP-Rule" id="MF_01565"/>
    </source>
</evidence>